<name>ISPF_SERP5</name>
<reference key="1">
    <citation type="submission" date="2007-09" db="EMBL/GenBank/DDBJ databases">
        <title>Complete sequence of chromosome of Serratia proteamaculans 568.</title>
        <authorList>
            <consortium name="US DOE Joint Genome Institute"/>
            <person name="Copeland A."/>
            <person name="Lucas S."/>
            <person name="Lapidus A."/>
            <person name="Barry K."/>
            <person name="Glavina del Rio T."/>
            <person name="Dalin E."/>
            <person name="Tice H."/>
            <person name="Pitluck S."/>
            <person name="Chain P."/>
            <person name="Malfatti S."/>
            <person name="Shin M."/>
            <person name="Vergez L."/>
            <person name="Schmutz J."/>
            <person name="Larimer F."/>
            <person name="Land M."/>
            <person name="Hauser L."/>
            <person name="Kyrpides N."/>
            <person name="Kim E."/>
            <person name="Taghavi S."/>
            <person name="Newman L."/>
            <person name="Vangronsveld J."/>
            <person name="van der Lelie D."/>
            <person name="Richardson P."/>
        </authorList>
    </citation>
    <scope>NUCLEOTIDE SEQUENCE [LARGE SCALE GENOMIC DNA]</scope>
    <source>
        <strain>568</strain>
    </source>
</reference>
<feature type="chain" id="PRO_1000057713" description="2-C-methyl-D-erythritol 2,4-cyclodiphosphate synthase">
    <location>
        <begin position="1"/>
        <end position="157"/>
    </location>
</feature>
<feature type="binding site" evidence="1">
    <location>
        <begin position="8"/>
        <end position="10"/>
    </location>
    <ligand>
        <name>4-CDP-2-C-methyl-D-erythritol 2-phosphate</name>
        <dbReference type="ChEBI" id="CHEBI:57919"/>
    </ligand>
</feature>
<feature type="binding site" evidence="1">
    <location>
        <position position="8"/>
    </location>
    <ligand>
        <name>a divalent metal cation</name>
        <dbReference type="ChEBI" id="CHEBI:60240"/>
    </ligand>
</feature>
<feature type="binding site" evidence="1">
    <location>
        <position position="10"/>
    </location>
    <ligand>
        <name>a divalent metal cation</name>
        <dbReference type="ChEBI" id="CHEBI:60240"/>
    </ligand>
</feature>
<feature type="binding site" evidence="1">
    <location>
        <begin position="34"/>
        <end position="35"/>
    </location>
    <ligand>
        <name>4-CDP-2-C-methyl-D-erythritol 2-phosphate</name>
        <dbReference type="ChEBI" id="CHEBI:57919"/>
    </ligand>
</feature>
<feature type="binding site" evidence="1">
    <location>
        <position position="42"/>
    </location>
    <ligand>
        <name>a divalent metal cation</name>
        <dbReference type="ChEBI" id="CHEBI:60240"/>
    </ligand>
</feature>
<feature type="binding site" evidence="1">
    <location>
        <begin position="56"/>
        <end position="58"/>
    </location>
    <ligand>
        <name>4-CDP-2-C-methyl-D-erythritol 2-phosphate</name>
        <dbReference type="ChEBI" id="CHEBI:57919"/>
    </ligand>
</feature>
<feature type="binding site" evidence="1">
    <location>
        <begin position="61"/>
        <end position="65"/>
    </location>
    <ligand>
        <name>4-CDP-2-C-methyl-D-erythritol 2-phosphate</name>
        <dbReference type="ChEBI" id="CHEBI:57919"/>
    </ligand>
</feature>
<feature type="binding site" evidence="1">
    <location>
        <begin position="100"/>
        <end position="106"/>
    </location>
    <ligand>
        <name>4-CDP-2-C-methyl-D-erythritol 2-phosphate</name>
        <dbReference type="ChEBI" id="CHEBI:57919"/>
    </ligand>
</feature>
<feature type="binding site" evidence="1">
    <location>
        <begin position="132"/>
        <end position="135"/>
    </location>
    <ligand>
        <name>4-CDP-2-C-methyl-D-erythritol 2-phosphate</name>
        <dbReference type="ChEBI" id="CHEBI:57919"/>
    </ligand>
</feature>
<feature type="binding site" evidence="1">
    <location>
        <position position="139"/>
    </location>
    <ligand>
        <name>4-CDP-2-C-methyl-D-erythritol 2-phosphate</name>
        <dbReference type="ChEBI" id="CHEBI:57919"/>
    </ligand>
</feature>
<feature type="binding site" evidence="1">
    <location>
        <position position="142"/>
    </location>
    <ligand>
        <name>4-CDP-2-C-methyl-D-erythritol 2-phosphate</name>
        <dbReference type="ChEBI" id="CHEBI:57919"/>
    </ligand>
</feature>
<feature type="site" description="Transition state stabilizer" evidence="1">
    <location>
        <position position="34"/>
    </location>
</feature>
<feature type="site" description="Transition state stabilizer" evidence="1">
    <location>
        <position position="133"/>
    </location>
</feature>
<accession>A8G9Z3</accession>
<sequence>MRIGHGFDVHKFGGEGPLVIGGVRIPYEKGLLAHSDGDVALHAATDALLGAAALGDIGKLFPDTDPAFKGADSRVLLREAWKRIRAKGYRLGNLDITIIAQAPKMAPHIPQMRVFLAEDLQCHMDDVNVKATTTEQLGFTGRGEGIACEAVALLIKE</sequence>
<gene>
    <name evidence="1" type="primary">ispF</name>
    <name type="ordered locus">Spro_0827</name>
</gene>
<dbReference type="EC" id="4.6.1.12" evidence="1"/>
<dbReference type="EMBL" id="CP000826">
    <property type="protein sequence ID" value="ABV39933.1"/>
    <property type="molecule type" value="Genomic_DNA"/>
</dbReference>
<dbReference type="SMR" id="A8G9Z3"/>
<dbReference type="STRING" id="399741.Spro_0827"/>
<dbReference type="KEGG" id="spe:Spro_0827"/>
<dbReference type="eggNOG" id="COG0245">
    <property type="taxonomic scope" value="Bacteria"/>
</dbReference>
<dbReference type="HOGENOM" id="CLU_084630_2_0_6"/>
<dbReference type="OrthoDB" id="9804336at2"/>
<dbReference type="UniPathway" id="UPA00056">
    <property type="reaction ID" value="UER00095"/>
</dbReference>
<dbReference type="GO" id="GO:0008685">
    <property type="term" value="F:2-C-methyl-D-erythritol 2,4-cyclodiphosphate synthase activity"/>
    <property type="evidence" value="ECO:0007669"/>
    <property type="project" value="UniProtKB-UniRule"/>
</dbReference>
<dbReference type="GO" id="GO:0046872">
    <property type="term" value="F:metal ion binding"/>
    <property type="evidence" value="ECO:0007669"/>
    <property type="project" value="UniProtKB-KW"/>
</dbReference>
<dbReference type="GO" id="GO:0019288">
    <property type="term" value="P:isopentenyl diphosphate biosynthetic process, methylerythritol 4-phosphate pathway"/>
    <property type="evidence" value="ECO:0007669"/>
    <property type="project" value="UniProtKB-UniRule"/>
</dbReference>
<dbReference type="GO" id="GO:0016114">
    <property type="term" value="P:terpenoid biosynthetic process"/>
    <property type="evidence" value="ECO:0007669"/>
    <property type="project" value="InterPro"/>
</dbReference>
<dbReference type="CDD" id="cd00554">
    <property type="entry name" value="MECDP_synthase"/>
    <property type="match status" value="1"/>
</dbReference>
<dbReference type="FunFam" id="3.30.1330.50:FF:000001">
    <property type="entry name" value="2-C-methyl-D-erythritol 2,4-cyclodiphosphate synthase"/>
    <property type="match status" value="1"/>
</dbReference>
<dbReference type="Gene3D" id="3.30.1330.50">
    <property type="entry name" value="2-C-methyl-D-erythritol 2,4-cyclodiphosphate synthase"/>
    <property type="match status" value="1"/>
</dbReference>
<dbReference type="HAMAP" id="MF_00107">
    <property type="entry name" value="IspF"/>
    <property type="match status" value="1"/>
</dbReference>
<dbReference type="InterPro" id="IPR003526">
    <property type="entry name" value="MECDP_synthase"/>
</dbReference>
<dbReference type="InterPro" id="IPR020555">
    <property type="entry name" value="MECDP_synthase_CS"/>
</dbReference>
<dbReference type="InterPro" id="IPR036571">
    <property type="entry name" value="MECDP_synthase_sf"/>
</dbReference>
<dbReference type="NCBIfam" id="TIGR00151">
    <property type="entry name" value="ispF"/>
    <property type="match status" value="1"/>
</dbReference>
<dbReference type="PANTHER" id="PTHR43181">
    <property type="entry name" value="2-C-METHYL-D-ERYTHRITOL 2,4-CYCLODIPHOSPHATE SYNTHASE, CHLOROPLASTIC"/>
    <property type="match status" value="1"/>
</dbReference>
<dbReference type="PANTHER" id="PTHR43181:SF1">
    <property type="entry name" value="2-C-METHYL-D-ERYTHRITOL 2,4-CYCLODIPHOSPHATE SYNTHASE, CHLOROPLASTIC"/>
    <property type="match status" value="1"/>
</dbReference>
<dbReference type="Pfam" id="PF02542">
    <property type="entry name" value="YgbB"/>
    <property type="match status" value="1"/>
</dbReference>
<dbReference type="SUPFAM" id="SSF69765">
    <property type="entry name" value="IpsF-like"/>
    <property type="match status" value="1"/>
</dbReference>
<dbReference type="PROSITE" id="PS01350">
    <property type="entry name" value="ISPF"/>
    <property type="match status" value="1"/>
</dbReference>
<organism>
    <name type="scientific">Serratia proteamaculans (strain 568)</name>
    <dbReference type="NCBI Taxonomy" id="399741"/>
    <lineage>
        <taxon>Bacteria</taxon>
        <taxon>Pseudomonadati</taxon>
        <taxon>Pseudomonadota</taxon>
        <taxon>Gammaproteobacteria</taxon>
        <taxon>Enterobacterales</taxon>
        <taxon>Yersiniaceae</taxon>
        <taxon>Serratia</taxon>
    </lineage>
</organism>
<proteinExistence type="inferred from homology"/>
<evidence type="ECO:0000255" key="1">
    <source>
        <dbReference type="HAMAP-Rule" id="MF_00107"/>
    </source>
</evidence>
<keyword id="KW-0414">Isoprene biosynthesis</keyword>
<keyword id="KW-0456">Lyase</keyword>
<keyword id="KW-0479">Metal-binding</keyword>
<protein>
    <recommendedName>
        <fullName evidence="1">2-C-methyl-D-erythritol 2,4-cyclodiphosphate synthase</fullName>
        <shortName evidence="1">MECDP-synthase</shortName>
        <shortName evidence="1">MECPP-synthase</shortName>
        <shortName evidence="1">MECPS</shortName>
        <ecNumber evidence="1">4.6.1.12</ecNumber>
    </recommendedName>
</protein>
<comment type="function">
    <text evidence="1">Involved in the biosynthesis of isopentenyl diphosphate (IPP) and dimethylallyl diphosphate (DMAPP), two major building blocks of isoprenoid compounds. Catalyzes the conversion of 4-diphosphocytidyl-2-C-methyl-D-erythritol 2-phosphate (CDP-ME2P) to 2-C-methyl-D-erythritol 2,4-cyclodiphosphate (ME-CPP) with a corresponding release of cytidine 5-monophosphate (CMP).</text>
</comment>
<comment type="catalytic activity">
    <reaction evidence="1">
        <text>4-CDP-2-C-methyl-D-erythritol 2-phosphate = 2-C-methyl-D-erythritol 2,4-cyclic diphosphate + CMP</text>
        <dbReference type="Rhea" id="RHEA:23864"/>
        <dbReference type="ChEBI" id="CHEBI:57919"/>
        <dbReference type="ChEBI" id="CHEBI:58483"/>
        <dbReference type="ChEBI" id="CHEBI:60377"/>
        <dbReference type="EC" id="4.6.1.12"/>
    </reaction>
</comment>
<comment type="cofactor">
    <cofactor evidence="1">
        <name>a divalent metal cation</name>
        <dbReference type="ChEBI" id="CHEBI:60240"/>
    </cofactor>
    <text evidence="1">Binds 1 divalent metal cation per subunit.</text>
</comment>
<comment type="pathway">
    <text evidence="1">Isoprenoid biosynthesis; isopentenyl diphosphate biosynthesis via DXP pathway; isopentenyl diphosphate from 1-deoxy-D-xylulose 5-phosphate: step 4/6.</text>
</comment>
<comment type="subunit">
    <text evidence="1">Homotrimer.</text>
</comment>
<comment type="similarity">
    <text evidence="1">Belongs to the IspF family.</text>
</comment>